<accession>B3CSH1</accession>
<gene>
    <name evidence="1" type="primary">nuoD</name>
    <name type="ordered locus">OTT_0914</name>
</gene>
<dbReference type="EC" id="7.1.1.-" evidence="1"/>
<dbReference type="EMBL" id="AP008981">
    <property type="protein sequence ID" value="BAG40372.1"/>
    <property type="molecule type" value="Genomic_DNA"/>
</dbReference>
<dbReference type="RefSeq" id="WP_012461499.1">
    <property type="nucleotide sequence ID" value="NC_010793.1"/>
</dbReference>
<dbReference type="SMR" id="B3CSH1"/>
<dbReference type="KEGG" id="ott:OTT_0914"/>
<dbReference type="HOGENOM" id="CLU_015134_1_2_5"/>
<dbReference type="OrthoDB" id="9801496at2"/>
<dbReference type="Proteomes" id="UP000001033">
    <property type="component" value="Chromosome"/>
</dbReference>
<dbReference type="GO" id="GO:0005886">
    <property type="term" value="C:plasma membrane"/>
    <property type="evidence" value="ECO:0007669"/>
    <property type="project" value="UniProtKB-SubCell"/>
</dbReference>
<dbReference type="GO" id="GO:0051287">
    <property type="term" value="F:NAD binding"/>
    <property type="evidence" value="ECO:0007669"/>
    <property type="project" value="InterPro"/>
</dbReference>
<dbReference type="GO" id="GO:0050136">
    <property type="term" value="F:NADH:ubiquinone reductase (non-electrogenic) activity"/>
    <property type="evidence" value="ECO:0007669"/>
    <property type="project" value="UniProtKB-UniRule"/>
</dbReference>
<dbReference type="GO" id="GO:0048038">
    <property type="term" value="F:quinone binding"/>
    <property type="evidence" value="ECO:0007669"/>
    <property type="project" value="UniProtKB-KW"/>
</dbReference>
<dbReference type="FunFam" id="1.10.645.10:FF:000005">
    <property type="entry name" value="NADH-quinone oxidoreductase subunit D"/>
    <property type="match status" value="1"/>
</dbReference>
<dbReference type="Gene3D" id="1.10.645.10">
    <property type="entry name" value="Cytochrome-c3 Hydrogenase, chain B"/>
    <property type="match status" value="1"/>
</dbReference>
<dbReference type="HAMAP" id="MF_01358">
    <property type="entry name" value="NDH1_NuoD"/>
    <property type="match status" value="1"/>
</dbReference>
<dbReference type="InterPro" id="IPR001135">
    <property type="entry name" value="NADH_Q_OxRdtase_suD"/>
</dbReference>
<dbReference type="InterPro" id="IPR014029">
    <property type="entry name" value="NADH_UbQ_OxRdtase_49kDa_CS"/>
</dbReference>
<dbReference type="InterPro" id="IPR022885">
    <property type="entry name" value="NDH1_su_D/H"/>
</dbReference>
<dbReference type="InterPro" id="IPR029014">
    <property type="entry name" value="NiFe-Hase_large"/>
</dbReference>
<dbReference type="NCBIfam" id="TIGR01962">
    <property type="entry name" value="NuoD"/>
    <property type="match status" value="1"/>
</dbReference>
<dbReference type="NCBIfam" id="NF004739">
    <property type="entry name" value="PRK06075.1"/>
    <property type="match status" value="1"/>
</dbReference>
<dbReference type="PANTHER" id="PTHR11993:SF10">
    <property type="entry name" value="NADH DEHYDROGENASE [UBIQUINONE] IRON-SULFUR PROTEIN 2, MITOCHONDRIAL"/>
    <property type="match status" value="1"/>
</dbReference>
<dbReference type="PANTHER" id="PTHR11993">
    <property type="entry name" value="NADH-UBIQUINONE OXIDOREDUCTASE 49 KDA SUBUNIT"/>
    <property type="match status" value="1"/>
</dbReference>
<dbReference type="Pfam" id="PF00346">
    <property type="entry name" value="Complex1_49kDa"/>
    <property type="match status" value="1"/>
</dbReference>
<dbReference type="SUPFAM" id="SSF56762">
    <property type="entry name" value="HydB/Nqo4-like"/>
    <property type="match status" value="1"/>
</dbReference>
<dbReference type="PROSITE" id="PS00535">
    <property type="entry name" value="COMPLEX1_49K"/>
    <property type="match status" value="1"/>
</dbReference>
<keyword id="KW-0997">Cell inner membrane</keyword>
<keyword id="KW-1003">Cell membrane</keyword>
<keyword id="KW-0472">Membrane</keyword>
<keyword id="KW-0520">NAD</keyword>
<keyword id="KW-0874">Quinone</keyword>
<keyword id="KW-1278">Translocase</keyword>
<keyword id="KW-0813">Transport</keyword>
<keyword id="KW-0830">Ubiquinone</keyword>
<proteinExistence type="inferred from homology"/>
<name>NUOD_ORITI</name>
<reference key="1">
    <citation type="journal article" date="2008" name="DNA Res.">
        <title>The whole-genome sequencing of the obligate intracellular bacterium Orientia tsutsugamushi revealed massive gene amplification during reductive genome evolution.</title>
        <authorList>
            <person name="Nakayama K."/>
            <person name="Yamashita A."/>
            <person name="Kurokawa K."/>
            <person name="Morimoto T."/>
            <person name="Ogawa M."/>
            <person name="Fukuhara M."/>
            <person name="Urakami H."/>
            <person name="Ohnishi M."/>
            <person name="Uchiyama I."/>
            <person name="Ogura Y."/>
            <person name="Ooka T."/>
            <person name="Oshima K."/>
            <person name="Tamura A."/>
            <person name="Hattori M."/>
            <person name="Hayashi T."/>
        </authorList>
    </citation>
    <scope>NUCLEOTIDE SEQUENCE [LARGE SCALE GENOMIC DNA]</scope>
    <source>
        <strain>Ikeda</strain>
    </source>
</reference>
<sequence>MALKKRSKHSKKFKLNLGPQHPATHGVLRLILEMDGEIVERADPHIGLLHRGTEKLIEYKTYLQAIPYFDRLDYVSPMCQEHAFALAIEHLLKCEVPLRAQYIRVMFSELTRILNHTLNIATQALDVGATTPLLWMFEEREKIMEFYERVSGSRLHANYFRPGGVSQDLPEGLIENIADFCEQFPCKIADLETLLTDNRIWKQRTVDIGIVSKQQAMDWGFSGVMLRGSGIAWDLRKSQPYDQYANLDFDVAIGKNGDCYDRYLIRIEEMYQSIKIIKQCIQKMPAGEIRTQDPSISPPKRSEIKKSMEALINHFKLYSEGYNVPAGEVYAAVEAPKGEFGVYLYSDGTNRPYRCRIKAPGFAHLQGLDFMARGHSLSDIITIIATLDIVFGEIDR</sequence>
<evidence type="ECO:0000255" key="1">
    <source>
        <dbReference type="HAMAP-Rule" id="MF_01358"/>
    </source>
</evidence>
<protein>
    <recommendedName>
        <fullName evidence="1">NADH-quinone oxidoreductase subunit D</fullName>
        <ecNumber evidence="1">7.1.1.-</ecNumber>
    </recommendedName>
    <alternativeName>
        <fullName evidence="1">NADH dehydrogenase I subunit D</fullName>
    </alternativeName>
    <alternativeName>
        <fullName evidence="1">NDH-1 subunit D</fullName>
    </alternativeName>
</protein>
<feature type="chain" id="PRO_0000357881" description="NADH-quinone oxidoreductase subunit D">
    <location>
        <begin position="1"/>
        <end position="396"/>
    </location>
</feature>
<comment type="function">
    <text evidence="1">NDH-1 shuttles electrons from NADH, via FMN and iron-sulfur (Fe-S) centers, to quinones in the respiratory chain. The immediate electron acceptor for the enzyme in this species is believed to be ubiquinone. Couples the redox reaction to proton translocation (for every two electrons transferred, four hydrogen ions are translocated across the cytoplasmic membrane), and thus conserves the redox energy in a proton gradient.</text>
</comment>
<comment type="catalytic activity">
    <reaction evidence="1">
        <text>a quinone + NADH + 5 H(+)(in) = a quinol + NAD(+) + 4 H(+)(out)</text>
        <dbReference type="Rhea" id="RHEA:57888"/>
        <dbReference type="ChEBI" id="CHEBI:15378"/>
        <dbReference type="ChEBI" id="CHEBI:24646"/>
        <dbReference type="ChEBI" id="CHEBI:57540"/>
        <dbReference type="ChEBI" id="CHEBI:57945"/>
        <dbReference type="ChEBI" id="CHEBI:132124"/>
    </reaction>
</comment>
<comment type="subunit">
    <text evidence="1">NDH-1 is composed of 14 different subunits. Subunits NuoB, C, D, E, F, and G constitute the peripheral sector of the complex.</text>
</comment>
<comment type="subcellular location">
    <subcellularLocation>
        <location evidence="1">Cell inner membrane</location>
        <topology evidence="1">Peripheral membrane protein</topology>
        <orientation evidence="1">Cytoplasmic side</orientation>
    </subcellularLocation>
</comment>
<comment type="similarity">
    <text evidence="1">Belongs to the complex I 49 kDa subunit family.</text>
</comment>
<organism>
    <name type="scientific">Orientia tsutsugamushi (strain Ikeda)</name>
    <name type="common">Rickettsia tsutsugamushi</name>
    <dbReference type="NCBI Taxonomy" id="334380"/>
    <lineage>
        <taxon>Bacteria</taxon>
        <taxon>Pseudomonadati</taxon>
        <taxon>Pseudomonadota</taxon>
        <taxon>Alphaproteobacteria</taxon>
        <taxon>Rickettsiales</taxon>
        <taxon>Rickettsiaceae</taxon>
        <taxon>Rickettsieae</taxon>
        <taxon>Orientia</taxon>
    </lineage>
</organism>